<gene>
    <name type="primary">Cenpt</name>
</gene>
<organism>
    <name type="scientific">Rattus norvegicus</name>
    <name type="common">Rat</name>
    <dbReference type="NCBI Taxonomy" id="10116"/>
    <lineage>
        <taxon>Eukaryota</taxon>
        <taxon>Metazoa</taxon>
        <taxon>Chordata</taxon>
        <taxon>Craniata</taxon>
        <taxon>Vertebrata</taxon>
        <taxon>Euteleostomi</taxon>
        <taxon>Mammalia</taxon>
        <taxon>Eutheria</taxon>
        <taxon>Euarchontoglires</taxon>
        <taxon>Glires</taxon>
        <taxon>Rodentia</taxon>
        <taxon>Myomorpha</taxon>
        <taxon>Muroidea</taxon>
        <taxon>Muridae</taxon>
        <taxon>Murinae</taxon>
        <taxon>Rattus</taxon>
    </lineage>
</organism>
<feature type="chain" id="PRO_0000249517" description="Centromere protein T">
    <location>
        <begin position="1"/>
        <end position="518"/>
    </location>
</feature>
<feature type="region of interest" description="Disordered" evidence="3">
    <location>
        <begin position="1"/>
        <end position="70"/>
    </location>
</feature>
<feature type="region of interest" description="Flexible stalk domain" evidence="1">
    <location>
        <begin position="94"/>
        <end position="381"/>
    </location>
</feature>
<feature type="region of interest" description="Disordered" evidence="3">
    <location>
        <begin position="102"/>
        <end position="156"/>
    </location>
</feature>
<feature type="region of interest" description="Disordered" evidence="3">
    <location>
        <begin position="271"/>
        <end position="362"/>
    </location>
</feature>
<feature type="region of interest" description="Disordered" evidence="3">
    <location>
        <begin position="375"/>
        <end position="412"/>
    </location>
</feature>
<feature type="compositionally biased region" description="Basic and acidic residues" evidence="3">
    <location>
        <begin position="19"/>
        <end position="28"/>
    </location>
</feature>
<feature type="compositionally biased region" description="Polar residues" evidence="3">
    <location>
        <begin position="34"/>
        <end position="57"/>
    </location>
</feature>
<feature type="compositionally biased region" description="Polar residues" evidence="3">
    <location>
        <begin position="294"/>
        <end position="306"/>
    </location>
</feature>
<feature type="compositionally biased region" description="Basic and acidic residues" evidence="3">
    <location>
        <begin position="326"/>
        <end position="343"/>
    </location>
</feature>
<feature type="compositionally biased region" description="Low complexity" evidence="3">
    <location>
        <begin position="384"/>
        <end position="395"/>
    </location>
</feature>
<feature type="modified residue" description="Phosphothreonine" evidence="2">
    <location>
        <position position="86"/>
    </location>
</feature>
<feature type="modified residue" description="Phosphoserine" evidence="5">
    <location>
        <position position="313"/>
    </location>
</feature>
<feature type="modified residue" description="Phosphoserine" evidence="5">
    <location>
        <position position="324"/>
    </location>
</feature>
<feature type="modified residue" description="Phosphoserine" evidence="2">
    <location>
        <position position="333"/>
    </location>
</feature>
<feature type="modified residue" description="Phosphoserine" evidence="5">
    <location>
        <position position="345"/>
    </location>
</feature>
<feature type="modified residue" description="Phosphoserine" evidence="5">
    <location>
        <position position="346"/>
    </location>
</feature>
<feature type="modified residue" description="Phosphoserine" evidence="2">
    <location>
        <position position="357"/>
    </location>
</feature>
<feature type="modified residue" description="Phosphoserine" evidence="5">
    <location>
        <position position="382"/>
    </location>
</feature>
<name>CENPT_RAT</name>
<sequence length="518" mass="56861">MADLSSPDGDPTIRTLLRHVLDTADSHTPRRRQSTQTNPQRRRSQTPYSKRQGSQRKTSTRKHSHGTGSVGRLARVQGHGHLEEQTPRTLLQNILLTAPESSTVMPNPVVKPAQVPEVARPSRRGSSRGSLELQLPELDPPSTLAPGLKAPGKRKQKLRLSVFQQEVNQQLPLPQEQRGAADGSSLASSFNLSFVPSVQPQTVDRPGLARRRPVRRPVNIGAFLQNLENKSLTSALPGDSHRTPVAALPTDVVFEDTQPFSQPLAGCSLSVHHSLPNPSQTEVEDAERVVGPRTPSTGTRPQSQMSRAGFGASPLPFSEPQPQSPELREAVGSKEAEEPKDLEGSSGDEETSGMPASRELSSSAQDLLLAEEPHQLFEPPPSPGVAAVSSESVPAKLPSRTRTAQPRHHQDPYKAGLSHYVKLFSFHTKMPVEKAALEMVEKCLDEYFQRLCNDLEVFAAHAGRKTVKPKDLELLMRRQGLVTDQVSLHVLVERYLPLEYRQQLIPCAFRGNSVFPAQ</sequence>
<evidence type="ECO:0000250" key="1"/>
<evidence type="ECO:0000250" key="2">
    <source>
        <dbReference type="UniProtKB" id="Q96BT3"/>
    </source>
</evidence>
<evidence type="ECO:0000256" key="3">
    <source>
        <dbReference type="SAM" id="MobiDB-lite"/>
    </source>
</evidence>
<evidence type="ECO:0000305" key="4"/>
<evidence type="ECO:0007744" key="5">
    <source>
    </source>
</evidence>
<comment type="function">
    <text evidence="2">Component of the CENPA-NAC (nucleosome-associated) complex, a complex that plays a central role in assembly of kinetochore proteins, mitotic progression and chromosome segregation. The CENPA-NAC complex recruits the CENPA-CAD (nucleosome distal) complex and may be involved in incorporation of newly synthesized CENPA into centromeres. Part of a nucleosome-associated complex that binds specifically to histone H3-containing nucleosomes at the centromere, as opposed to nucleosomes containing CENPA. Component of the heterotetrameric CENP-T-W-S-X complex that binds and supercoils DNA, and plays an important role in kinetochore assembly. CENPT has a fundamental role in kinetochore assembly and function. It is one of the inner kinetochore proteins, with most further proteins binding downstream. Required for normal chromosome organization and normal progress through mitosis.</text>
</comment>
<comment type="subunit">
    <text evidence="2">Component of the CENPA-CAD complex, composed of CENPI, CENPK, CENPL, CENPO, CENPP, CENPQ, CENPR and CENPS. The CENPA-CAD complex is probably recruited on centromeres by the CENPA-NAC complex, at least composed of CENPA, CENPC, CENPH, CENPM, CENPN, CENPT and CENPU. Identified in a centromeric complex containing histones H2A, H2B, H3 and H4, and at least CENPA, CENPB, CENPC, CENPT, CENPN, HJURP, SUPT16H, SSRP1 and RSF1. Interacts (via N-terminus) with the NDC80 complex. Heterodimer with CENPW; this dimer coassembles with CENPS-CENPX heterodimers at centromeres to form the tetrameric CENP-T-W-S-X complex.</text>
</comment>
<comment type="subcellular location">
    <subcellularLocation>
        <location evidence="2">Nucleus</location>
    </subcellularLocation>
    <subcellularLocation>
        <location evidence="2">Chromosome</location>
        <location evidence="2">Centromere</location>
    </subcellularLocation>
    <subcellularLocation>
        <location evidence="2">Chromosome</location>
        <location evidence="2">Centromere</location>
        <location evidence="2">Kinetochore</location>
    </subcellularLocation>
    <text evidence="2">Constitutively localizes to centromeres throughout the cell cycle, and to kinetochores during mitosis. Localizes to the inner kinetochore, and may connect it to the outer kinetochore via its N-terminus.</text>
</comment>
<comment type="domain">
    <text evidence="1">The largest part of the sequence forms an elongated and flexible stalk structure that is connected to a C-terminal globular domain with a histone-type fold.</text>
</comment>
<comment type="PTM">
    <text evidence="2">Dynamically phosphorylated during the cell cycle. Phosphorylated during G2 phase, metaphase and anaphase, but not during telophase or G1 phase.</text>
</comment>
<comment type="similarity">
    <text evidence="4">Belongs to the CENP-T/CNN1 family.</text>
</comment>
<proteinExistence type="evidence at protein level"/>
<keyword id="KW-0131">Cell cycle</keyword>
<keyword id="KW-0132">Cell division</keyword>
<keyword id="KW-0137">Centromere</keyword>
<keyword id="KW-0158">Chromosome</keyword>
<keyword id="KW-0238">DNA-binding</keyword>
<keyword id="KW-0995">Kinetochore</keyword>
<keyword id="KW-0498">Mitosis</keyword>
<keyword id="KW-0539">Nucleus</keyword>
<keyword id="KW-0597">Phosphoprotein</keyword>
<keyword id="KW-1185">Reference proteome</keyword>
<accession>Q561R1</accession>
<dbReference type="EMBL" id="BC093396">
    <property type="protein sequence ID" value="AAH93396.1"/>
    <property type="molecule type" value="mRNA"/>
</dbReference>
<dbReference type="RefSeq" id="NP_001019428.1">
    <property type="nucleotide sequence ID" value="NM_001024257.1"/>
</dbReference>
<dbReference type="SMR" id="Q561R1"/>
<dbReference type="FunCoup" id="Q561R1">
    <property type="interactions" value="1298"/>
</dbReference>
<dbReference type="STRING" id="10116.ENSRNOP00000029297"/>
<dbReference type="iPTMnet" id="Q561R1"/>
<dbReference type="PhosphoSitePlus" id="Q561R1"/>
<dbReference type="PaxDb" id="10116-ENSRNOP00000029297"/>
<dbReference type="Ensembl" id="ENSRNOT00000036702.5">
    <property type="protein sequence ID" value="ENSRNOP00000029297.3"/>
    <property type="gene ID" value="ENSRNOG00000024178.6"/>
</dbReference>
<dbReference type="GeneID" id="307805"/>
<dbReference type="KEGG" id="rno:307805"/>
<dbReference type="UCSC" id="RGD:1309383">
    <property type="organism name" value="rat"/>
</dbReference>
<dbReference type="AGR" id="RGD:1309383"/>
<dbReference type="CTD" id="80152"/>
<dbReference type="RGD" id="1309383">
    <property type="gene designation" value="Cenpt"/>
</dbReference>
<dbReference type="eggNOG" id="ENOG502RZH1">
    <property type="taxonomic scope" value="Eukaryota"/>
</dbReference>
<dbReference type="GeneTree" id="ENSGT00390000003044"/>
<dbReference type="HOGENOM" id="CLU_040180_0_0_1"/>
<dbReference type="InParanoid" id="Q561R1"/>
<dbReference type="OMA" id="YFQHLCN"/>
<dbReference type="OrthoDB" id="10071681at2759"/>
<dbReference type="PhylomeDB" id="Q561R1"/>
<dbReference type="TreeFam" id="TF332946"/>
<dbReference type="Reactome" id="R-RNO-141444">
    <property type="pathway name" value="Amplification of signal from unattached kinetochores via a MAD2 inhibitory signal"/>
</dbReference>
<dbReference type="Reactome" id="R-RNO-2467813">
    <property type="pathway name" value="Separation of Sister Chromatids"/>
</dbReference>
<dbReference type="Reactome" id="R-RNO-2500257">
    <property type="pathway name" value="Resolution of Sister Chromatid Cohesion"/>
</dbReference>
<dbReference type="Reactome" id="R-RNO-5663220">
    <property type="pathway name" value="RHO GTPases Activate Formins"/>
</dbReference>
<dbReference type="Reactome" id="R-RNO-606279">
    <property type="pathway name" value="Deposition of new CENPA-containing nucleosomes at the centromere"/>
</dbReference>
<dbReference type="Reactome" id="R-RNO-68877">
    <property type="pathway name" value="Mitotic Prometaphase"/>
</dbReference>
<dbReference type="Reactome" id="R-RNO-9648025">
    <property type="pathway name" value="EML4 and NUDC in mitotic spindle formation"/>
</dbReference>
<dbReference type="PRO" id="PR:Q561R1"/>
<dbReference type="Proteomes" id="UP000002494">
    <property type="component" value="Chromosome 19"/>
</dbReference>
<dbReference type="Bgee" id="ENSRNOG00000024178">
    <property type="expression patterns" value="Expressed in testis and 16 other cell types or tissues"/>
</dbReference>
<dbReference type="GO" id="GO:0000775">
    <property type="term" value="C:chromosome, centromeric region"/>
    <property type="evidence" value="ECO:0000250"/>
    <property type="project" value="UniProtKB"/>
</dbReference>
<dbReference type="GO" id="GO:0000939">
    <property type="term" value="C:inner kinetochore"/>
    <property type="evidence" value="ECO:0000266"/>
    <property type="project" value="RGD"/>
</dbReference>
<dbReference type="GO" id="GO:0000776">
    <property type="term" value="C:kinetochore"/>
    <property type="evidence" value="ECO:0000266"/>
    <property type="project" value="RGD"/>
</dbReference>
<dbReference type="GO" id="GO:0005634">
    <property type="term" value="C:nucleus"/>
    <property type="evidence" value="ECO:0007669"/>
    <property type="project" value="UniProtKB-SubCell"/>
</dbReference>
<dbReference type="GO" id="GO:0003677">
    <property type="term" value="F:DNA binding"/>
    <property type="evidence" value="ECO:0007669"/>
    <property type="project" value="UniProtKB-KW"/>
</dbReference>
<dbReference type="GO" id="GO:0046982">
    <property type="term" value="F:protein heterodimerization activity"/>
    <property type="evidence" value="ECO:0007669"/>
    <property type="project" value="InterPro"/>
</dbReference>
<dbReference type="GO" id="GO:0051301">
    <property type="term" value="P:cell division"/>
    <property type="evidence" value="ECO:0007669"/>
    <property type="project" value="UniProtKB-KW"/>
</dbReference>
<dbReference type="GO" id="GO:0051276">
    <property type="term" value="P:chromosome organization"/>
    <property type="evidence" value="ECO:0000250"/>
    <property type="project" value="UniProtKB"/>
</dbReference>
<dbReference type="GO" id="GO:0007059">
    <property type="term" value="P:chromosome segregation"/>
    <property type="evidence" value="ECO:0000250"/>
    <property type="project" value="UniProtKB"/>
</dbReference>
<dbReference type="GO" id="GO:0051382">
    <property type="term" value="P:kinetochore assembly"/>
    <property type="evidence" value="ECO:0000250"/>
    <property type="project" value="UniProtKB"/>
</dbReference>
<dbReference type="GO" id="GO:0000278">
    <property type="term" value="P:mitotic cell cycle"/>
    <property type="evidence" value="ECO:0000250"/>
    <property type="project" value="UniProtKB"/>
</dbReference>
<dbReference type="CDD" id="cd22920">
    <property type="entry name" value="HFD_CENP-T"/>
    <property type="match status" value="1"/>
</dbReference>
<dbReference type="FunFam" id="1.10.20.10:FF:000050">
    <property type="entry name" value="centromere protein T isoform X2"/>
    <property type="match status" value="1"/>
</dbReference>
<dbReference type="Gene3D" id="1.10.20.10">
    <property type="entry name" value="Histone, subunit A"/>
    <property type="match status" value="1"/>
</dbReference>
<dbReference type="InterPro" id="IPR028255">
    <property type="entry name" value="CENP-T"/>
</dbReference>
<dbReference type="InterPro" id="IPR035425">
    <property type="entry name" value="CENP-T/H4_C"/>
</dbReference>
<dbReference type="InterPro" id="IPR032373">
    <property type="entry name" value="CENP-T_N"/>
</dbReference>
<dbReference type="InterPro" id="IPR009072">
    <property type="entry name" value="Histone-fold"/>
</dbReference>
<dbReference type="PANTHER" id="PTHR46904">
    <property type="entry name" value="CENTROMERE PROTEIN T"/>
    <property type="match status" value="1"/>
</dbReference>
<dbReference type="PANTHER" id="PTHR46904:SF1">
    <property type="entry name" value="CENTROMERE PROTEIN T"/>
    <property type="match status" value="1"/>
</dbReference>
<dbReference type="Pfam" id="PF15511">
    <property type="entry name" value="CENP-T_C"/>
    <property type="match status" value="1"/>
</dbReference>
<dbReference type="Pfam" id="PF16171">
    <property type="entry name" value="CENP-T_N"/>
    <property type="match status" value="1"/>
</dbReference>
<dbReference type="SUPFAM" id="SSF47113">
    <property type="entry name" value="Histone-fold"/>
    <property type="match status" value="1"/>
</dbReference>
<reference key="1">
    <citation type="journal article" date="2004" name="Genome Res.">
        <title>The status, quality, and expansion of the NIH full-length cDNA project: the Mammalian Gene Collection (MGC).</title>
        <authorList>
            <consortium name="The MGC Project Team"/>
        </authorList>
    </citation>
    <scope>NUCLEOTIDE SEQUENCE [LARGE SCALE MRNA]</scope>
    <source>
        <tissue>Thymus</tissue>
    </source>
</reference>
<reference key="2">
    <citation type="journal article" date="2012" name="Nat. Commun.">
        <title>Quantitative maps of protein phosphorylation sites across 14 different rat organs and tissues.</title>
        <authorList>
            <person name="Lundby A."/>
            <person name="Secher A."/>
            <person name="Lage K."/>
            <person name="Nordsborg N.B."/>
            <person name="Dmytriyev A."/>
            <person name="Lundby C."/>
            <person name="Olsen J.V."/>
        </authorList>
    </citation>
    <scope>PHOSPHORYLATION [LARGE SCALE ANALYSIS] AT SER-313; SER-324; SER-345; SER-346 AND SER-382</scope>
    <scope>IDENTIFICATION BY MASS SPECTROMETRY [LARGE SCALE ANALYSIS]</scope>
</reference>
<protein>
    <recommendedName>
        <fullName>Centromere protein T</fullName>
        <shortName>CENP-T</shortName>
    </recommendedName>
</protein>